<accession>Q9P7S1</accession>
<accession>O42705</accession>
<organism>
    <name type="scientific">Schizosaccharomyces pombe (strain 972 / ATCC 24843)</name>
    <name type="common">Fission yeast</name>
    <dbReference type="NCBI Taxonomy" id="284812"/>
    <lineage>
        <taxon>Eukaryota</taxon>
        <taxon>Fungi</taxon>
        <taxon>Dikarya</taxon>
        <taxon>Ascomycota</taxon>
        <taxon>Taphrinomycotina</taxon>
        <taxon>Schizosaccharomycetes</taxon>
        <taxon>Schizosaccharomycetales</taxon>
        <taxon>Schizosaccharomycetaceae</taxon>
        <taxon>Schizosaccharomyces</taxon>
    </lineage>
</organism>
<reference key="1">
    <citation type="journal article" date="2002" name="Nature">
        <title>The genome sequence of Schizosaccharomyces pombe.</title>
        <authorList>
            <person name="Wood V."/>
            <person name="Gwilliam R."/>
            <person name="Rajandream M.A."/>
            <person name="Lyne M.H."/>
            <person name="Lyne R."/>
            <person name="Stewart A."/>
            <person name="Sgouros J.G."/>
            <person name="Peat N."/>
            <person name="Hayles J."/>
            <person name="Baker S.G."/>
            <person name="Basham D."/>
            <person name="Bowman S."/>
            <person name="Brooks K."/>
            <person name="Brown D."/>
            <person name="Brown S."/>
            <person name="Chillingworth T."/>
            <person name="Churcher C.M."/>
            <person name="Collins M."/>
            <person name="Connor R."/>
            <person name="Cronin A."/>
            <person name="Davis P."/>
            <person name="Feltwell T."/>
            <person name="Fraser A."/>
            <person name="Gentles S."/>
            <person name="Goble A."/>
            <person name="Hamlin N."/>
            <person name="Harris D.E."/>
            <person name="Hidalgo J."/>
            <person name="Hodgson G."/>
            <person name="Holroyd S."/>
            <person name="Hornsby T."/>
            <person name="Howarth S."/>
            <person name="Huckle E.J."/>
            <person name="Hunt S."/>
            <person name="Jagels K."/>
            <person name="James K.D."/>
            <person name="Jones L."/>
            <person name="Jones M."/>
            <person name="Leather S."/>
            <person name="McDonald S."/>
            <person name="McLean J."/>
            <person name="Mooney P."/>
            <person name="Moule S."/>
            <person name="Mungall K.L."/>
            <person name="Murphy L.D."/>
            <person name="Niblett D."/>
            <person name="Odell C."/>
            <person name="Oliver K."/>
            <person name="O'Neil S."/>
            <person name="Pearson D."/>
            <person name="Quail M.A."/>
            <person name="Rabbinowitsch E."/>
            <person name="Rutherford K.M."/>
            <person name="Rutter S."/>
            <person name="Saunders D."/>
            <person name="Seeger K."/>
            <person name="Sharp S."/>
            <person name="Skelton J."/>
            <person name="Simmonds M.N."/>
            <person name="Squares R."/>
            <person name="Squares S."/>
            <person name="Stevens K."/>
            <person name="Taylor K."/>
            <person name="Taylor R.G."/>
            <person name="Tivey A."/>
            <person name="Walsh S.V."/>
            <person name="Warren T."/>
            <person name="Whitehead S."/>
            <person name="Woodward J.R."/>
            <person name="Volckaert G."/>
            <person name="Aert R."/>
            <person name="Robben J."/>
            <person name="Grymonprez B."/>
            <person name="Weltjens I."/>
            <person name="Vanstreels E."/>
            <person name="Rieger M."/>
            <person name="Schaefer M."/>
            <person name="Mueller-Auer S."/>
            <person name="Gabel C."/>
            <person name="Fuchs M."/>
            <person name="Duesterhoeft A."/>
            <person name="Fritzc C."/>
            <person name="Holzer E."/>
            <person name="Moestl D."/>
            <person name="Hilbert H."/>
            <person name="Borzym K."/>
            <person name="Langer I."/>
            <person name="Beck A."/>
            <person name="Lehrach H."/>
            <person name="Reinhardt R."/>
            <person name="Pohl T.M."/>
            <person name="Eger P."/>
            <person name="Zimmermann W."/>
            <person name="Wedler H."/>
            <person name="Wambutt R."/>
            <person name="Purnelle B."/>
            <person name="Goffeau A."/>
            <person name="Cadieu E."/>
            <person name="Dreano S."/>
            <person name="Gloux S."/>
            <person name="Lelaure V."/>
            <person name="Mottier S."/>
            <person name="Galibert F."/>
            <person name="Aves S.J."/>
            <person name="Xiang Z."/>
            <person name="Hunt C."/>
            <person name="Moore K."/>
            <person name="Hurst S.M."/>
            <person name="Lucas M."/>
            <person name="Rochet M."/>
            <person name="Gaillardin C."/>
            <person name="Tallada V.A."/>
            <person name="Garzon A."/>
            <person name="Thode G."/>
            <person name="Daga R.R."/>
            <person name="Cruzado L."/>
            <person name="Jimenez J."/>
            <person name="Sanchez M."/>
            <person name="del Rey F."/>
            <person name="Benito J."/>
            <person name="Dominguez A."/>
            <person name="Revuelta J.L."/>
            <person name="Moreno S."/>
            <person name="Armstrong J."/>
            <person name="Forsburg S.L."/>
            <person name="Cerutti L."/>
            <person name="Lowe T."/>
            <person name="McCombie W.R."/>
            <person name="Paulsen I."/>
            <person name="Potashkin J."/>
            <person name="Shpakovski G.V."/>
            <person name="Ussery D."/>
            <person name="Barrell B.G."/>
            <person name="Nurse P."/>
        </authorList>
    </citation>
    <scope>NUCLEOTIDE SEQUENCE [LARGE SCALE GENOMIC DNA]</scope>
    <source>
        <strain>972 / ATCC 24843</strain>
    </source>
</reference>
<reference key="2">
    <citation type="submission" date="1998-02" db="EMBL/GenBank/DDBJ databases">
        <title>S.pombe YNL123w homolog.</title>
        <authorList>
            <person name="Kawamukai M."/>
        </authorList>
    </citation>
    <scope>NUCLEOTIDE SEQUENCE [MRNA] OF 606-996</scope>
</reference>
<dbReference type="EMBL" id="CU329670">
    <property type="protein sequence ID" value="CAB72237.1"/>
    <property type="molecule type" value="Genomic_DNA"/>
</dbReference>
<dbReference type="EMBL" id="AB010900">
    <property type="protein sequence ID" value="BAA24801.1"/>
    <property type="molecule type" value="mRNA"/>
</dbReference>
<dbReference type="PIR" id="T43318">
    <property type="entry name" value="T43318"/>
</dbReference>
<dbReference type="PIR" id="T50186">
    <property type="entry name" value="T50186"/>
</dbReference>
<dbReference type="SMR" id="Q9P7S1"/>
<dbReference type="BioGRID" id="278303">
    <property type="interactions" value="10"/>
</dbReference>
<dbReference type="FunCoup" id="Q9P7S1">
    <property type="interactions" value="42"/>
</dbReference>
<dbReference type="STRING" id="284812.Q9P7S1"/>
<dbReference type="iPTMnet" id="Q9P7S1"/>
<dbReference type="PaxDb" id="4896-SPAC23G3.12c.1"/>
<dbReference type="EnsemblFungi" id="SPAC23G3.12c.1">
    <property type="protein sequence ID" value="SPAC23G3.12c.1:pep"/>
    <property type="gene ID" value="SPAC23G3.12c"/>
</dbReference>
<dbReference type="KEGG" id="spo:2541812"/>
<dbReference type="PomBase" id="SPAC23G3.12c"/>
<dbReference type="VEuPathDB" id="FungiDB:SPAC23G3.12c"/>
<dbReference type="eggNOG" id="KOG1421">
    <property type="taxonomic scope" value="Eukaryota"/>
</dbReference>
<dbReference type="HOGENOM" id="CLU_003212_0_0_1"/>
<dbReference type="InParanoid" id="Q9P7S1"/>
<dbReference type="OMA" id="FWGHCVF"/>
<dbReference type="PhylomeDB" id="Q9P7S1"/>
<dbReference type="PRO" id="PR:Q9P7S1"/>
<dbReference type="Proteomes" id="UP000002485">
    <property type="component" value="Chromosome I"/>
</dbReference>
<dbReference type="GO" id="GO:0005634">
    <property type="term" value="C:nucleus"/>
    <property type="evidence" value="ECO:0007005"/>
    <property type="project" value="PomBase"/>
</dbReference>
<dbReference type="GO" id="GO:0004252">
    <property type="term" value="F:serine-type endopeptidase activity"/>
    <property type="evidence" value="ECO:0000318"/>
    <property type="project" value="GO_Central"/>
</dbReference>
<dbReference type="GO" id="GO:0006629">
    <property type="term" value="P:lipid metabolic process"/>
    <property type="evidence" value="ECO:0000266"/>
    <property type="project" value="PomBase"/>
</dbReference>
<dbReference type="GO" id="GO:0006508">
    <property type="term" value="P:proteolysis"/>
    <property type="evidence" value="ECO:0007669"/>
    <property type="project" value="InterPro"/>
</dbReference>
<dbReference type="CDD" id="cd06786">
    <property type="entry name" value="cpPDZ1_ScNma111-like"/>
    <property type="match status" value="1"/>
</dbReference>
<dbReference type="CDD" id="cd06719">
    <property type="entry name" value="PDZ2-4_Nma111p-like"/>
    <property type="match status" value="1"/>
</dbReference>
<dbReference type="FunFam" id="2.40.10.120:FF:000013">
    <property type="entry name" value="Pro-apoptotic serine protease NMA111"/>
    <property type="match status" value="1"/>
</dbReference>
<dbReference type="Gene3D" id="2.30.42.10">
    <property type="match status" value="2"/>
</dbReference>
<dbReference type="Gene3D" id="2.40.10.120">
    <property type="match status" value="2"/>
</dbReference>
<dbReference type="InterPro" id="IPR001478">
    <property type="entry name" value="PDZ"/>
</dbReference>
<dbReference type="InterPro" id="IPR025926">
    <property type="entry name" value="PDZ-like_dom"/>
</dbReference>
<dbReference type="InterPro" id="IPR036034">
    <property type="entry name" value="PDZ_sf"/>
</dbReference>
<dbReference type="InterPro" id="IPR009003">
    <property type="entry name" value="Peptidase_S1_PA"/>
</dbReference>
<dbReference type="InterPro" id="IPR001940">
    <property type="entry name" value="Peptidase_S1C"/>
</dbReference>
<dbReference type="PANTHER" id="PTHR46366">
    <property type="entry name" value="PRO-APOPTOTIC SERINE PROTEASE NMA111"/>
    <property type="match status" value="1"/>
</dbReference>
<dbReference type="PANTHER" id="PTHR46366:SF8">
    <property type="entry name" value="PRO-APOPTOTIC SERINE PROTEASE NMA111"/>
    <property type="match status" value="1"/>
</dbReference>
<dbReference type="Pfam" id="PF12812">
    <property type="entry name" value="PDZ_1"/>
    <property type="match status" value="2"/>
</dbReference>
<dbReference type="Pfam" id="PF13365">
    <property type="entry name" value="Trypsin_2"/>
    <property type="match status" value="1"/>
</dbReference>
<dbReference type="PRINTS" id="PR00834">
    <property type="entry name" value="PROTEASES2C"/>
</dbReference>
<dbReference type="SMART" id="SM00228">
    <property type="entry name" value="PDZ"/>
    <property type="match status" value="3"/>
</dbReference>
<dbReference type="SUPFAM" id="SSF50156">
    <property type="entry name" value="PDZ domain-like"/>
    <property type="match status" value="3"/>
</dbReference>
<dbReference type="SUPFAM" id="SSF50494">
    <property type="entry name" value="Trypsin-like serine proteases"/>
    <property type="match status" value="2"/>
</dbReference>
<gene>
    <name type="ORF">SPAC23G3.12c</name>
</gene>
<proteinExistence type="evidence at transcript level"/>
<comment type="similarity">
    <text evidence="2">Belongs to the peptidase S1C family.</text>
</comment>
<evidence type="ECO:0000256" key="1">
    <source>
        <dbReference type="SAM" id="MobiDB-lite"/>
    </source>
</evidence>
<evidence type="ECO:0000305" key="2"/>
<name>YIFC_SCHPO</name>
<protein>
    <recommendedName>
        <fullName>PDZ domain-containing protein C23G3.12c</fullName>
    </recommendedName>
</protein>
<keyword id="KW-1185">Reference proteome</keyword>
<keyword id="KW-0677">Repeat</keyword>
<feature type="chain" id="PRO_0000116790" description="PDZ domain-containing protein C23G3.12c">
    <location>
        <begin position="1"/>
        <end position="996"/>
    </location>
</feature>
<feature type="domain" description="PDZ 1">
    <location>
        <begin position="280"/>
        <end position="358"/>
    </location>
</feature>
<feature type="domain" description="PDZ 2">
    <location>
        <begin position="745"/>
        <end position="827"/>
    </location>
</feature>
<feature type="domain" description="PDZ 3">
    <location>
        <begin position="860"/>
        <end position="930"/>
    </location>
</feature>
<feature type="region of interest" description="Disordered" evidence="1">
    <location>
        <begin position="1"/>
        <end position="35"/>
    </location>
</feature>
<feature type="region of interest" description="Disordered" evidence="1">
    <location>
        <begin position="972"/>
        <end position="996"/>
    </location>
</feature>
<feature type="compositionally biased region" description="Acidic residues" evidence="1">
    <location>
        <begin position="980"/>
        <end position="996"/>
    </location>
</feature>
<sequence>MSIKKRARAGSKSDDIGNKTPKKNGIEHEATKSSETVIEMTPSGPIAESKKWKESIARVVKSVVSIRFSQVAAFDTDESGTGEASAFVVDAKNGYMLTNRHVVCAGPFVGHAVFDNHEEVEVFPVYRDPVHDFGFLRFDPKKIRYMNVEQLELRPDLAKVGTEIRVVGNDAAEKLSILAGWISRIDRNVPDYGELTYCDFNTNYIQAAANASGGSSGSPVVERNGNVVALQAGGHMIAATDYFLPLDRPLRALRCLQNNTPITRGTIQAQFLIKTFDECSRLGLDSAMEEKVRTLFPEATSMLVVETVLPEGPSFKKLKEGDILLYVNSMILINLIELESILDESVGKDVVLTVQRGSELVELTCTAQSTHDIAPDRYVEVCGAKFHNLSYQLARQYALPVKGVFISEPAGSFRLEGPEYGYILDSIAYKPVPDLDTFIEVMRDIPDRSRVAVGYHFIHDKHSLITDVVEIDRHWLKAFRMVTRNDETGLWDFKNLGDPLPAEPSKPCTTSIPKLNVENFGPTANIINCFVKVLYYMPLHLDGSRKSRKKGTALVLDKDKGLAVTSRSTVPYDLGDLTITVADSIQIPAEVVHLHPTQNLAFIKYDPKLLGDTPIQAAKLKDYYVSQGDPVNFFGFNSKSRVVAAKTSVTDVITMVIPSSPMPRFRAINFESITVESNLSTQCGSGVLTDDDGLVVALWLTHYGEQTSRGTDVKYHLGLASPVVLSTLRRLQSGVNVNPRILNVEFRAIQLAQARSLGLPAERIRKIETESGKKHQLFMITHVEAGTPRILTDGDIIISANGKSITRIRDLQVDDVTEVDMEILREGKVQTVKVPTFPSDNCETNRVVICWGATLQAPHRAVRLQIEDLPSNVFVTNRGRGSPADQYDLGAAQFITAVNGVTTLNLEDFVREIRKIDDNSYVRVSTSTFDKVPVVLTIKMNKHYFPTIDLVQDAKAENGWRAVQYDEVGEKKNPSMGFTIDEEVDDNTFDTEGEQQ</sequence>